<keyword id="KW-0025">Alternative splicing</keyword>
<keyword id="KW-0067">ATP-binding</keyword>
<keyword id="KW-1003">Cell membrane</keyword>
<keyword id="KW-0325">Glycoprotein</keyword>
<keyword id="KW-0418">Kinase</keyword>
<keyword id="KW-0433">Leucine-rich repeat</keyword>
<keyword id="KW-0472">Membrane</keyword>
<keyword id="KW-0547">Nucleotide-binding</keyword>
<keyword id="KW-0597">Phosphoprotein</keyword>
<keyword id="KW-0675">Receptor</keyword>
<keyword id="KW-1185">Reference proteome</keyword>
<keyword id="KW-0677">Repeat</keyword>
<keyword id="KW-0723">Serine/threonine-protein kinase</keyword>
<keyword id="KW-0732">Signal</keyword>
<keyword id="KW-0808">Transferase</keyword>
<keyword id="KW-0812">Transmembrane</keyword>
<keyword id="KW-1133">Transmembrane helix</keyword>
<name>Y1561_ARATH</name>
<feature type="signal peptide" evidence="2">
    <location>
        <begin position="1"/>
        <end position="29"/>
    </location>
</feature>
<feature type="chain" id="PRO_0000387535" description="Probable LRR receptor-like serine/threonine-protein kinase At1g56130">
    <location>
        <begin position="30"/>
        <end position="1032"/>
    </location>
</feature>
<feature type="topological domain" description="Extracellular" evidence="2">
    <location>
        <begin position="30"/>
        <end position="636"/>
    </location>
</feature>
<feature type="transmembrane region" description="Helical" evidence="2">
    <location>
        <begin position="637"/>
        <end position="657"/>
    </location>
</feature>
<feature type="topological domain" description="Cytoplasmic" evidence="2">
    <location>
        <begin position="658"/>
        <end position="1032"/>
    </location>
</feature>
<feature type="repeat" description="LRR 1">
    <location>
        <begin position="101"/>
        <end position="122"/>
    </location>
</feature>
<feature type="repeat" description="LRR 2">
    <location>
        <begin position="123"/>
        <end position="146"/>
    </location>
</feature>
<feature type="repeat" description="LRR 3">
    <location>
        <begin position="148"/>
        <end position="170"/>
    </location>
</feature>
<feature type="repeat" description="LRR 4">
    <location>
        <begin position="171"/>
        <end position="194"/>
    </location>
</feature>
<feature type="repeat" description="LRR 5">
    <location>
        <begin position="196"/>
        <end position="217"/>
    </location>
</feature>
<feature type="repeat" description="LRR 6">
    <location>
        <begin position="242"/>
        <end position="265"/>
    </location>
</feature>
<feature type="repeat" description="LRR 7">
    <location>
        <begin position="290"/>
        <end position="314"/>
    </location>
</feature>
<feature type="repeat" description="LRR 8">
    <location>
        <begin position="315"/>
        <end position="338"/>
    </location>
</feature>
<feature type="repeat" description="LRR 9">
    <location>
        <begin position="340"/>
        <end position="360"/>
    </location>
</feature>
<feature type="repeat" description="LRR 10">
    <location>
        <begin position="361"/>
        <end position="385"/>
    </location>
</feature>
<feature type="domain" description="Protein kinase" evidence="3">
    <location>
        <begin position="694"/>
        <end position="968"/>
    </location>
</feature>
<feature type="region of interest" description="Disordered" evidence="5">
    <location>
        <begin position="1008"/>
        <end position="1032"/>
    </location>
</feature>
<feature type="active site" description="Proton acceptor" evidence="3 4">
    <location>
        <position position="818"/>
    </location>
</feature>
<feature type="binding site" evidence="3">
    <location>
        <begin position="700"/>
        <end position="708"/>
    </location>
    <ligand>
        <name>ATP</name>
        <dbReference type="ChEBI" id="CHEBI:30616"/>
    </ligand>
</feature>
<feature type="binding site" evidence="3">
    <location>
        <position position="722"/>
    </location>
    <ligand>
        <name>ATP</name>
        <dbReference type="ChEBI" id="CHEBI:30616"/>
    </ligand>
</feature>
<feature type="modified residue" description="Phosphothreonine" evidence="1">
    <location>
        <position position="683"/>
    </location>
</feature>
<feature type="modified residue" description="Phosphotyrosine" evidence="1">
    <location>
        <position position="767"/>
    </location>
</feature>
<feature type="modified residue" description="Phosphoserine" evidence="1">
    <location>
        <position position="822"/>
    </location>
</feature>
<feature type="modified residue" description="Phosphoserine" evidence="1">
    <location>
        <position position="851"/>
    </location>
</feature>
<feature type="modified residue" description="Phosphothreonine" evidence="1">
    <location>
        <position position="852"/>
    </location>
</feature>
<feature type="modified residue" description="Phosphothreonine" evidence="1">
    <location>
        <position position="857"/>
    </location>
</feature>
<feature type="modified residue" description="Phosphotyrosine" evidence="1">
    <location>
        <position position="865"/>
    </location>
</feature>
<feature type="glycosylation site" description="N-linked (GlcNAc...) asparagine" evidence="2">
    <location>
        <position position="31"/>
    </location>
</feature>
<feature type="glycosylation site" description="N-linked (GlcNAc...) asparagine" evidence="2">
    <location>
        <position position="61"/>
    </location>
</feature>
<feature type="glycosylation site" description="N-linked (GlcNAc...) asparagine" evidence="2">
    <location>
        <position position="95"/>
    </location>
</feature>
<feature type="glycosylation site" description="N-linked (GlcNAc...) asparagine" evidence="2">
    <location>
        <position position="145"/>
    </location>
</feature>
<feature type="glycosylation site" description="N-linked (GlcNAc...) asparagine" evidence="2">
    <location>
        <position position="182"/>
    </location>
</feature>
<feature type="glycosylation site" description="N-linked (GlcNAc...) asparagine" evidence="2">
    <location>
        <position position="265"/>
    </location>
</feature>
<feature type="glycosylation site" description="N-linked (GlcNAc...) asparagine" evidence="2">
    <location>
        <position position="302"/>
    </location>
</feature>
<feature type="glycosylation site" description="N-linked (GlcNAc...) asparagine" evidence="2">
    <location>
        <position position="337"/>
    </location>
</feature>
<feature type="glycosylation site" description="N-linked (GlcNAc...) asparagine" evidence="2">
    <location>
        <position position="348"/>
    </location>
</feature>
<feature type="glycosylation site" description="N-linked (GlcNAc...) asparagine" evidence="2">
    <location>
        <position position="352"/>
    </location>
</feature>
<feature type="glycosylation site" description="N-linked (GlcNAc...) asparagine" evidence="2">
    <location>
        <position position="394"/>
    </location>
</feature>
<feature type="glycosylation site" description="N-linked (GlcNAc...) asparagine" evidence="2">
    <location>
        <position position="580"/>
    </location>
</feature>
<feature type="glycosylation site" description="N-linked (GlcNAc...) asparagine" evidence="2">
    <location>
        <position position="633"/>
    </location>
</feature>
<feature type="splice variant" id="VSP_038283" description="In isoform 2." evidence="6">
    <original>YYGLGLENGGYTVT</original>
    <variation>FYFYHLERFGTTTF</variation>
    <location>
        <begin position="509"/>
        <end position="522"/>
    </location>
</feature>
<feature type="splice variant" id="VSP_038284" description="In isoform 2." evidence="6">
    <location>
        <begin position="523"/>
        <end position="1032"/>
    </location>
</feature>
<feature type="sequence conflict" description="In Ref. 1; AAG50912." evidence="7" ref="1">
    <original>W</original>
    <variation>WI</variation>
    <location>
        <position position="151"/>
    </location>
</feature>
<organism>
    <name type="scientific">Arabidopsis thaliana</name>
    <name type="common">Mouse-ear cress</name>
    <dbReference type="NCBI Taxonomy" id="3702"/>
    <lineage>
        <taxon>Eukaryota</taxon>
        <taxon>Viridiplantae</taxon>
        <taxon>Streptophyta</taxon>
        <taxon>Embryophyta</taxon>
        <taxon>Tracheophyta</taxon>
        <taxon>Spermatophyta</taxon>
        <taxon>Magnoliopsida</taxon>
        <taxon>eudicotyledons</taxon>
        <taxon>Gunneridae</taxon>
        <taxon>Pentapetalae</taxon>
        <taxon>rosids</taxon>
        <taxon>malvids</taxon>
        <taxon>Brassicales</taxon>
        <taxon>Brassicaceae</taxon>
        <taxon>Camelineae</taxon>
        <taxon>Arabidopsis</taxon>
    </lineage>
</organism>
<proteinExistence type="evidence at transcript level"/>
<accession>C0LGH2</accession>
<accession>Q9C7J1</accession>
<accession>Q9SGT9</accession>
<reference key="1">
    <citation type="journal article" date="2000" name="Nature">
        <title>Sequence and analysis of chromosome 1 of the plant Arabidopsis thaliana.</title>
        <authorList>
            <person name="Theologis A."/>
            <person name="Ecker J.R."/>
            <person name="Palm C.J."/>
            <person name="Federspiel N.A."/>
            <person name="Kaul S."/>
            <person name="White O."/>
            <person name="Alonso J."/>
            <person name="Altafi H."/>
            <person name="Araujo R."/>
            <person name="Bowman C.L."/>
            <person name="Brooks S.Y."/>
            <person name="Buehler E."/>
            <person name="Chan A."/>
            <person name="Chao Q."/>
            <person name="Chen H."/>
            <person name="Cheuk R.F."/>
            <person name="Chin C.W."/>
            <person name="Chung M.K."/>
            <person name="Conn L."/>
            <person name="Conway A.B."/>
            <person name="Conway A.R."/>
            <person name="Creasy T.H."/>
            <person name="Dewar K."/>
            <person name="Dunn P."/>
            <person name="Etgu P."/>
            <person name="Feldblyum T.V."/>
            <person name="Feng J.-D."/>
            <person name="Fong B."/>
            <person name="Fujii C.Y."/>
            <person name="Gill J.E."/>
            <person name="Goldsmith A.D."/>
            <person name="Haas B."/>
            <person name="Hansen N.F."/>
            <person name="Hughes B."/>
            <person name="Huizar L."/>
            <person name="Hunter J.L."/>
            <person name="Jenkins J."/>
            <person name="Johnson-Hopson C."/>
            <person name="Khan S."/>
            <person name="Khaykin E."/>
            <person name="Kim C.J."/>
            <person name="Koo H.L."/>
            <person name="Kremenetskaia I."/>
            <person name="Kurtz D.B."/>
            <person name="Kwan A."/>
            <person name="Lam B."/>
            <person name="Langin-Hooper S."/>
            <person name="Lee A."/>
            <person name="Lee J.M."/>
            <person name="Lenz C.A."/>
            <person name="Li J.H."/>
            <person name="Li Y.-P."/>
            <person name="Lin X."/>
            <person name="Liu S.X."/>
            <person name="Liu Z.A."/>
            <person name="Luros J.S."/>
            <person name="Maiti R."/>
            <person name="Marziali A."/>
            <person name="Militscher J."/>
            <person name="Miranda M."/>
            <person name="Nguyen M."/>
            <person name="Nierman W.C."/>
            <person name="Osborne B.I."/>
            <person name="Pai G."/>
            <person name="Peterson J."/>
            <person name="Pham P.K."/>
            <person name="Rizzo M."/>
            <person name="Rooney T."/>
            <person name="Rowley D."/>
            <person name="Sakano H."/>
            <person name="Salzberg S.L."/>
            <person name="Schwartz J.R."/>
            <person name="Shinn P."/>
            <person name="Southwick A.M."/>
            <person name="Sun H."/>
            <person name="Tallon L.J."/>
            <person name="Tambunga G."/>
            <person name="Toriumi M.J."/>
            <person name="Town C.D."/>
            <person name="Utterback T."/>
            <person name="Van Aken S."/>
            <person name="Vaysberg M."/>
            <person name="Vysotskaia V.S."/>
            <person name="Walker M."/>
            <person name="Wu D."/>
            <person name="Yu G."/>
            <person name="Fraser C.M."/>
            <person name="Venter J.C."/>
            <person name="Davis R.W."/>
        </authorList>
    </citation>
    <scope>NUCLEOTIDE SEQUENCE [LARGE SCALE GENOMIC DNA]</scope>
    <source>
        <strain>cv. Columbia</strain>
    </source>
</reference>
<reference key="2">
    <citation type="journal article" date="2017" name="Plant J.">
        <title>Araport11: a complete reannotation of the Arabidopsis thaliana reference genome.</title>
        <authorList>
            <person name="Cheng C.Y."/>
            <person name="Krishnakumar V."/>
            <person name="Chan A.P."/>
            <person name="Thibaud-Nissen F."/>
            <person name="Schobel S."/>
            <person name="Town C.D."/>
        </authorList>
    </citation>
    <scope>GENOME REANNOTATION</scope>
    <source>
        <strain>cv. Columbia</strain>
    </source>
</reference>
<reference key="3">
    <citation type="journal article" date="2010" name="BMC Genomics">
        <title>Genome-wide cloning and sequence analysis of leucine-rich repeat receptor-like protein kinase genes in Arabidopsis thaliana.</title>
        <authorList>
            <person name="Gou X."/>
            <person name="He K."/>
            <person name="Yang H."/>
            <person name="Yuan T."/>
            <person name="Lin H."/>
            <person name="Clouse S.D."/>
            <person name="Li J."/>
        </authorList>
    </citation>
    <scope>NUCLEOTIDE SEQUENCE [LARGE SCALE MRNA] (ISOFORM 2)</scope>
    <source>
        <strain>cv. Columbia</strain>
    </source>
</reference>
<dbReference type="EC" id="2.7.11.1"/>
<dbReference type="EMBL" id="AC009894">
    <property type="protein sequence ID" value="AAF02838.1"/>
    <property type="status" value="ALT_SEQ"/>
    <property type="molecule type" value="Genomic_DNA"/>
</dbReference>
<dbReference type="EMBL" id="AC069159">
    <property type="protein sequence ID" value="AAG50912.1"/>
    <property type="status" value="ALT_SEQ"/>
    <property type="molecule type" value="Genomic_DNA"/>
</dbReference>
<dbReference type="EMBL" id="CP002684">
    <property type="protein sequence ID" value="ANM59201.1"/>
    <property type="molecule type" value="Genomic_DNA"/>
</dbReference>
<dbReference type="EMBL" id="FJ708662">
    <property type="protein sequence ID" value="ACN59257.1"/>
    <property type="molecule type" value="mRNA"/>
</dbReference>
<dbReference type="PIR" id="F96602">
    <property type="entry name" value="F96602"/>
</dbReference>
<dbReference type="RefSeq" id="NP_176009.1">
    <molecule id="C0LGH2-1"/>
    <property type="nucleotide sequence ID" value="NM_104491.2"/>
</dbReference>
<dbReference type="SMR" id="C0LGH2"/>
<dbReference type="BioGRID" id="27290">
    <property type="interactions" value="20"/>
</dbReference>
<dbReference type="FunCoup" id="C0LGH2">
    <property type="interactions" value="465"/>
</dbReference>
<dbReference type="IntAct" id="C0LGH2">
    <property type="interactions" value="20"/>
</dbReference>
<dbReference type="STRING" id="3702.C0LGH2"/>
<dbReference type="GlyGen" id="C0LGH2">
    <property type="glycosylation" value="13 sites"/>
</dbReference>
<dbReference type="PaxDb" id="3702-AT1G56130.1"/>
<dbReference type="ProteomicsDB" id="242390">
    <molecule id="C0LGH2-1"/>
</dbReference>
<dbReference type="EnsemblPlants" id="AT1G56130.2">
    <molecule id="C0LGH2-1"/>
    <property type="protein sequence ID" value="AT1G56130.2"/>
    <property type="gene ID" value="AT1G56130"/>
</dbReference>
<dbReference type="GeneID" id="842065"/>
<dbReference type="Gramene" id="AT1G56130.2">
    <molecule id="C0LGH2-1"/>
    <property type="protein sequence ID" value="AT1G56130.2"/>
    <property type="gene ID" value="AT1G56130"/>
</dbReference>
<dbReference type="KEGG" id="ath:AT1G56130"/>
<dbReference type="Araport" id="AT1G56130"/>
<dbReference type="TAIR" id="AT1G56130"/>
<dbReference type="eggNOG" id="ENOG502QUW9">
    <property type="taxonomic scope" value="Eukaryota"/>
</dbReference>
<dbReference type="HOGENOM" id="CLU_000288_114_1_1"/>
<dbReference type="InParanoid" id="C0LGH2"/>
<dbReference type="OMA" id="ISATNQW"/>
<dbReference type="PhylomeDB" id="C0LGH2"/>
<dbReference type="PRO" id="PR:C0LGH2"/>
<dbReference type="Proteomes" id="UP000006548">
    <property type="component" value="Chromosome 1"/>
</dbReference>
<dbReference type="ExpressionAtlas" id="C0LGH2">
    <property type="expression patterns" value="baseline and differential"/>
</dbReference>
<dbReference type="GO" id="GO:0005886">
    <property type="term" value="C:plasma membrane"/>
    <property type="evidence" value="ECO:0007005"/>
    <property type="project" value="TAIR"/>
</dbReference>
<dbReference type="GO" id="GO:0005524">
    <property type="term" value="F:ATP binding"/>
    <property type="evidence" value="ECO:0007669"/>
    <property type="project" value="UniProtKB-KW"/>
</dbReference>
<dbReference type="GO" id="GO:0106310">
    <property type="term" value="F:protein serine kinase activity"/>
    <property type="evidence" value="ECO:0007669"/>
    <property type="project" value="RHEA"/>
</dbReference>
<dbReference type="GO" id="GO:0004674">
    <property type="term" value="F:protein serine/threonine kinase activity"/>
    <property type="evidence" value="ECO:0007669"/>
    <property type="project" value="UniProtKB-KW"/>
</dbReference>
<dbReference type="CDD" id="cd14066">
    <property type="entry name" value="STKc_IRAK"/>
    <property type="match status" value="1"/>
</dbReference>
<dbReference type="FunFam" id="2.60.120.430:FF:000002">
    <property type="entry name" value="Leucine-rich repeat receptor-like protein kinase"/>
    <property type="match status" value="1"/>
</dbReference>
<dbReference type="FunFam" id="3.30.200.20:FF:000140">
    <property type="entry name" value="Leucine-rich repeat receptor-like protein kinase"/>
    <property type="match status" value="1"/>
</dbReference>
<dbReference type="FunFam" id="3.80.10.10:FF:000497">
    <property type="entry name" value="Leucine-rich repeat transmembrane protein kinase"/>
    <property type="match status" value="1"/>
</dbReference>
<dbReference type="FunFam" id="3.80.10.10:FF:001823">
    <property type="entry name" value="Leucine-rich repeat transmembrane protein kinase"/>
    <property type="match status" value="1"/>
</dbReference>
<dbReference type="FunFam" id="1.10.510.10:FF:000044">
    <property type="entry name" value="Putative LRR receptor-like serine/threonine-protein kinase"/>
    <property type="match status" value="1"/>
</dbReference>
<dbReference type="Gene3D" id="2.60.120.430">
    <property type="entry name" value="Galactose-binding lectin"/>
    <property type="match status" value="1"/>
</dbReference>
<dbReference type="Gene3D" id="3.30.200.20">
    <property type="entry name" value="Phosphorylase Kinase, domain 1"/>
    <property type="match status" value="1"/>
</dbReference>
<dbReference type="Gene3D" id="3.80.10.10">
    <property type="entry name" value="Ribonuclease Inhibitor"/>
    <property type="match status" value="2"/>
</dbReference>
<dbReference type="Gene3D" id="1.10.510.10">
    <property type="entry name" value="Transferase(Phosphotransferase) domain 1"/>
    <property type="match status" value="1"/>
</dbReference>
<dbReference type="InterPro" id="IPR011009">
    <property type="entry name" value="Kinase-like_dom_sf"/>
</dbReference>
<dbReference type="InterPro" id="IPR001611">
    <property type="entry name" value="Leu-rich_rpt"/>
</dbReference>
<dbReference type="InterPro" id="IPR032675">
    <property type="entry name" value="LRR_dom_sf"/>
</dbReference>
<dbReference type="InterPro" id="IPR055414">
    <property type="entry name" value="LRR_R13L4/SHOC2-like"/>
</dbReference>
<dbReference type="InterPro" id="IPR051824">
    <property type="entry name" value="LRR_Rcpt-Like_S/T_Kinase"/>
</dbReference>
<dbReference type="InterPro" id="IPR021720">
    <property type="entry name" value="Malectin_dom"/>
</dbReference>
<dbReference type="InterPro" id="IPR000719">
    <property type="entry name" value="Prot_kinase_dom"/>
</dbReference>
<dbReference type="InterPro" id="IPR001245">
    <property type="entry name" value="Ser-Thr/Tyr_kinase_cat_dom"/>
</dbReference>
<dbReference type="InterPro" id="IPR008271">
    <property type="entry name" value="Ser/Thr_kinase_AS"/>
</dbReference>
<dbReference type="PANTHER" id="PTHR48006">
    <property type="entry name" value="LEUCINE-RICH REPEAT-CONTAINING PROTEIN DDB_G0281931-RELATED"/>
    <property type="match status" value="1"/>
</dbReference>
<dbReference type="PANTHER" id="PTHR48006:SF99">
    <property type="entry name" value="PROTEIN KINASE DOMAIN-CONTAINING PROTEIN"/>
    <property type="match status" value="1"/>
</dbReference>
<dbReference type="Pfam" id="PF00560">
    <property type="entry name" value="LRR_1"/>
    <property type="match status" value="2"/>
</dbReference>
<dbReference type="Pfam" id="PF23598">
    <property type="entry name" value="LRR_14"/>
    <property type="match status" value="1"/>
</dbReference>
<dbReference type="Pfam" id="PF11721">
    <property type="entry name" value="Malectin"/>
    <property type="match status" value="1"/>
</dbReference>
<dbReference type="Pfam" id="PF07714">
    <property type="entry name" value="PK_Tyr_Ser-Thr"/>
    <property type="match status" value="1"/>
</dbReference>
<dbReference type="SMART" id="SM00220">
    <property type="entry name" value="S_TKc"/>
    <property type="match status" value="1"/>
</dbReference>
<dbReference type="SUPFAM" id="SSF52058">
    <property type="entry name" value="L domain-like"/>
    <property type="match status" value="1"/>
</dbReference>
<dbReference type="SUPFAM" id="SSF56112">
    <property type="entry name" value="Protein kinase-like (PK-like)"/>
    <property type="match status" value="1"/>
</dbReference>
<dbReference type="PROSITE" id="PS50011">
    <property type="entry name" value="PROTEIN_KINASE_DOM"/>
    <property type="match status" value="1"/>
</dbReference>
<dbReference type="PROSITE" id="PS00108">
    <property type="entry name" value="PROTEIN_KINASE_ST"/>
    <property type="match status" value="1"/>
</dbReference>
<gene>
    <name type="ordered locus">At1g56130</name>
    <name type="ORF">F14G9.25</name>
    <name type="ORF">T6H22.8</name>
</gene>
<sequence>MTRIRRSPCLLLLIIWFMCIAGSVQVVQSQNQTGATTHPDEARALNSIFAAWKIQAPREWNISGELCSGAAIDASVLDSNPAYNPLIKCDCSFQNSTICRITNIKVYAIDVVGPIPPELWTLTYLTNLNLGQNVLTGSLPPAIGNLTRMQWMTFGINALSGPVPKEIGLLTDLRLLGISSNNFSGSIPDEIGRCTKLQQMYIDSSGLSGRIPLSFANLVQLEQAWIADLEVTDQIPDFIGDWTKLTTLRIIGTGLSGPIPSSFSNLTSLTELRLGDISSGSSSLDFIKDMKSLSVLVLRNNNLTGTIPSTIGEHSSLRQVDLSFNKLHGPIPASLFNLSQLTHLFLGNNTLNGSFPTQKTQSLRNVDVSYNDLSGSLPSWVSLPSLKLNLVANNFTLEGLDNRVLPGLNCLQKNFPCNRGKGIYSDFSINCGGPEKRSVTGALFEREDEDFGPASFFVSAGQRWAASSVGLFAGSSNNIYIATSQSQFVNTLDSELFQSARLSASSVRYYGLGLENGGYTVTLQFAEIQILGSTSTTWKGLGRRRFDIYVQGRLVEKDFDVRRTAGDSTVRAVQRVYKANVSENHLEVHLFWAGKGTCCIPIQGAYGPLISAVSATPDFTPTVANKPPSKGKNRTGTIVGVIVGVGLLSILAGVVMFTIRKRRKRYTDDEELLGMDVKPYIFTYSELKSATQDFDPSNKLGEGGFGPVYKGNLNDGRVVAVKLLSVGSRQGKGQFVAEIVAISSVLHRNLVKLYGCCFEGEHRMLVYEYLPNGSLDQALFGDKTLHLDWSTRYEICLGVARGLVYLHEEASVRIVHRDVKASNILLDSRLVPQISDFGLAKLYDDKKTHISTRVAGTIGYLAPEYAMRGHLTEKTDVYAFGVVALELVSGRPNSDENLEEEKKYLLEWAWNLHEKSRDIELIDDKLTDFNMEEAKRMIGIALLCTQTSHALRPPMSRVVAMLSGDVEIGDVTSKPGYVSDWRFDDTTGSSLSGFQIKDTTGYSMSLVAPGSEISPRDSDFKPMLGSKINEGR</sequence>
<evidence type="ECO:0000250" key="1">
    <source>
        <dbReference type="UniProtKB" id="O48814"/>
    </source>
</evidence>
<evidence type="ECO:0000255" key="2"/>
<evidence type="ECO:0000255" key="3">
    <source>
        <dbReference type="PROSITE-ProRule" id="PRU00159"/>
    </source>
</evidence>
<evidence type="ECO:0000255" key="4">
    <source>
        <dbReference type="PROSITE-ProRule" id="PRU10027"/>
    </source>
</evidence>
<evidence type="ECO:0000256" key="5">
    <source>
        <dbReference type="SAM" id="MobiDB-lite"/>
    </source>
</evidence>
<evidence type="ECO:0000303" key="6">
    <source>
    </source>
</evidence>
<evidence type="ECO:0000305" key="7"/>
<protein>
    <recommendedName>
        <fullName>Probable LRR receptor-like serine/threonine-protein kinase At1g56130</fullName>
        <ecNumber>2.7.11.1</ecNumber>
    </recommendedName>
</protein>
<comment type="catalytic activity">
    <reaction>
        <text>L-seryl-[protein] + ATP = O-phospho-L-seryl-[protein] + ADP + H(+)</text>
        <dbReference type="Rhea" id="RHEA:17989"/>
        <dbReference type="Rhea" id="RHEA-COMP:9863"/>
        <dbReference type="Rhea" id="RHEA-COMP:11604"/>
        <dbReference type="ChEBI" id="CHEBI:15378"/>
        <dbReference type="ChEBI" id="CHEBI:29999"/>
        <dbReference type="ChEBI" id="CHEBI:30616"/>
        <dbReference type="ChEBI" id="CHEBI:83421"/>
        <dbReference type="ChEBI" id="CHEBI:456216"/>
        <dbReference type="EC" id="2.7.11.1"/>
    </reaction>
</comment>
<comment type="catalytic activity">
    <reaction>
        <text>L-threonyl-[protein] + ATP = O-phospho-L-threonyl-[protein] + ADP + H(+)</text>
        <dbReference type="Rhea" id="RHEA:46608"/>
        <dbReference type="Rhea" id="RHEA-COMP:11060"/>
        <dbReference type="Rhea" id="RHEA-COMP:11605"/>
        <dbReference type="ChEBI" id="CHEBI:15378"/>
        <dbReference type="ChEBI" id="CHEBI:30013"/>
        <dbReference type="ChEBI" id="CHEBI:30616"/>
        <dbReference type="ChEBI" id="CHEBI:61977"/>
        <dbReference type="ChEBI" id="CHEBI:456216"/>
        <dbReference type="EC" id="2.7.11.1"/>
    </reaction>
</comment>
<comment type="subcellular location">
    <subcellularLocation>
        <location evidence="2">Cell membrane</location>
        <topology evidence="2">Single-pass type I membrane protein</topology>
    </subcellularLocation>
</comment>
<comment type="alternative products">
    <event type="alternative splicing"/>
    <isoform>
        <id>C0LGH2-1</id>
        <name>1</name>
        <sequence type="displayed"/>
    </isoform>
    <isoform>
        <id>C0LGH2-2</id>
        <name>2</name>
        <sequence type="described" ref="VSP_038283 VSP_038284"/>
    </isoform>
</comment>
<comment type="similarity">
    <text evidence="3">Belongs to the protein kinase superfamily. Ser/Thr protein kinase family.</text>
</comment>
<comment type="sequence caution" evidence="7">
    <conflict type="erroneous gene model prediction">
        <sequence resource="EMBL-CDS" id="AAF02838"/>
    </conflict>
</comment>
<comment type="sequence caution" evidence="7">
    <conflict type="erroneous gene model prediction">
        <sequence resource="EMBL-CDS" id="AAG50912"/>
    </conflict>
</comment>